<name>IAAS_HORVU</name>
<feature type="signal peptide" evidence="4">
    <location>
        <begin position="1"/>
        <end position="22"/>
    </location>
</feature>
<feature type="chain" id="PRO_0000016931" description="Alpha-amylase/subtilisin inhibitor">
    <location>
        <begin position="23"/>
        <end position="203"/>
    </location>
</feature>
<feature type="region of interest" description="Disordered" evidence="2">
    <location>
        <begin position="1"/>
        <end position="34"/>
    </location>
</feature>
<feature type="compositionally biased region" description="Polar residues" evidence="2">
    <location>
        <begin position="1"/>
        <end position="12"/>
    </location>
</feature>
<feature type="compositionally biased region" description="Pro residues" evidence="2">
    <location>
        <begin position="15"/>
        <end position="26"/>
    </location>
</feature>
<feature type="site" description="Reactive bond" evidence="1">
    <location>
        <begin position="89"/>
        <end position="90"/>
    </location>
</feature>
<feature type="disulfide bond" evidence="3">
    <location>
        <begin position="65"/>
        <end position="112"/>
    </location>
</feature>
<feature type="disulfide bond" evidence="3">
    <location>
        <begin position="166"/>
        <end position="170"/>
    </location>
</feature>
<feature type="sequence conflict" description="In Ref. 4; AA sequence." evidence="5" ref="4">
    <original>D</original>
    <variation>K</variation>
    <location>
        <position position="24"/>
    </location>
</feature>
<feature type="sequence conflict" description="In Ref. 4; AA sequence." evidence="5" ref="4">
    <original>H</original>
    <variation>K</variation>
    <location>
        <position position="29"/>
    </location>
</feature>
<feature type="sequence conflict" description="In Ref. 5; AA sequence." evidence="5" ref="5">
    <original>D</original>
    <variation>A</variation>
    <location>
        <position position="32"/>
    </location>
</feature>
<feature type="sequence conflict" description="In Ref. 4; AA sequence." evidence="5" ref="4">
    <original>D</original>
    <variation>G</variation>
    <location>
        <position position="32"/>
    </location>
</feature>
<feature type="sequence conflict" description="In Ref. 3; AA sequence." evidence="5" ref="3">
    <original>S</original>
    <variation>H</variation>
    <location>
        <position position="154"/>
    </location>
</feature>
<feature type="sequence conflict" description="In Ref. 3; AA sequence." evidence="5" ref="3">
    <original>H</original>
    <variation>S</variation>
    <location>
        <position position="159"/>
    </location>
</feature>
<feature type="strand" evidence="7">
    <location>
        <begin position="42"/>
        <end position="48"/>
    </location>
</feature>
<feature type="helix" evidence="7">
    <location>
        <begin position="49"/>
        <end position="51"/>
    </location>
</feature>
<feature type="strand" evidence="7">
    <location>
        <begin position="55"/>
        <end position="58"/>
    </location>
</feature>
<feature type="strand" evidence="7">
    <location>
        <begin position="61"/>
        <end position="64"/>
    </location>
</feature>
<feature type="strand" evidence="7">
    <location>
        <begin position="68"/>
        <end position="71"/>
    </location>
</feature>
<feature type="strand" evidence="7">
    <location>
        <begin position="82"/>
        <end position="88"/>
    </location>
</feature>
<feature type="strand" evidence="6">
    <location>
        <begin position="92"/>
        <end position="95"/>
    </location>
</feature>
<feature type="strand" evidence="7">
    <location>
        <begin position="102"/>
        <end position="106"/>
    </location>
</feature>
<feature type="strand" evidence="7">
    <location>
        <begin position="125"/>
        <end position="127"/>
    </location>
</feature>
<feature type="strand" evidence="7">
    <location>
        <begin position="130"/>
        <end position="132"/>
    </location>
</feature>
<feature type="helix" evidence="6">
    <location>
        <begin position="144"/>
        <end position="146"/>
    </location>
</feature>
<feature type="strand" evidence="7">
    <location>
        <begin position="148"/>
        <end position="152"/>
    </location>
</feature>
<feature type="strand" evidence="7">
    <location>
        <begin position="161"/>
        <end position="172"/>
    </location>
</feature>
<feature type="strand" evidence="7">
    <location>
        <begin position="174"/>
        <end position="176"/>
    </location>
</feature>
<feature type="strand" evidence="7">
    <location>
        <begin position="179"/>
        <end position="182"/>
    </location>
</feature>
<feature type="strand" evidence="7">
    <location>
        <begin position="184"/>
        <end position="191"/>
    </location>
</feature>
<feature type="strand" evidence="7">
    <location>
        <begin position="194"/>
        <end position="199"/>
    </location>
</feature>
<organism>
    <name type="scientific">Hordeum vulgare</name>
    <name type="common">Barley</name>
    <dbReference type="NCBI Taxonomy" id="4513"/>
    <lineage>
        <taxon>Eukaryota</taxon>
        <taxon>Viridiplantae</taxon>
        <taxon>Streptophyta</taxon>
        <taxon>Embryophyta</taxon>
        <taxon>Tracheophyta</taxon>
        <taxon>Spermatophyta</taxon>
        <taxon>Magnoliopsida</taxon>
        <taxon>Liliopsida</taxon>
        <taxon>Poales</taxon>
        <taxon>Poaceae</taxon>
        <taxon>BOP clade</taxon>
        <taxon>Pooideae</taxon>
        <taxon>Triticodae</taxon>
        <taxon>Triticeae</taxon>
        <taxon>Hordeinae</taxon>
        <taxon>Hordeum</taxon>
    </lineage>
</organism>
<evidence type="ECO:0000250" key="1"/>
<evidence type="ECO:0000256" key="2">
    <source>
        <dbReference type="SAM" id="MobiDB-lite"/>
    </source>
</evidence>
<evidence type="ECO:0000269" key="3">
    <source>
    </source>
</evidence>
<evidence type="ECO:0000269" key="4">
    <source ref="3"/>
</evidence>
<evidence type="ECO:0000305" key="5"/>
<evidence type="ECO:0007829" key="6">
    <source>
        <dbReference type="PDB" id="1AVA"/>
    </source>
</evidence>
<evidence type="ECO:0007829" key="7">
    <source>
        <dbReference type="PDB" id="3BX1"/>
    </source>
</evidence>
<dbReference type="EMBL" id="X16276">
    <property type="protein sequence ID" value="CAA34352.1"/>
    <property type="molecule type" value="mRNA"/>
</dbReference>
<dbReference type="EMBL" id="Z12961">
    <property type="protein sequence ID" value="CAA78305.1"/>
    <property type="status" value="ALT_FRAME"/>
    <property type="molecule type" value="Genomic_DNA"/>
</dbReference>
<dbReference type="PIR" id="S04860">
    <property type="entry name" value="S04860"/>
</dbReference>
<dbReference type="PIR" id="S22639">
    <property type="entry name" value="S22639"/>
</dbReference>
<dbReference type="PDB" id="1AVA">
    <property type="method" value="X-ray"/>
    <property type="resolution" value="1.90 A"/>
    <property type="chains" value="C/D=23-203"/>
</dbReference>
<dbReference type="PDB" id="2IWT">
    <property type="method" value="X-ray"/>
    <property type="resolution" value="2.30 A"/>
    <property type="chains" value="B=22-203"/>
</dbReference>
<dbReference type="PDB" id="3BX1">
    <property type="method" value="X-ray"/>
    <property type="resolution" value="1.85 A"/>
    <property type="chains" value="C/D=23-203"/>
</dbReference>
<dbReference type="PDBsum" id="1AVA"/>
<dbReference type="PDBsum" id="2IWT"/>
<dbReference type="PDBsum" id="3BX1"/>
<dbReference type="SMR" id="P07596"/>
<dbReference type="DIP" id="DIP-6098N"/>
<dbReference type="IntAct" id="P07596">
    <property type="interactions" value="1"/>
</dbReference>
<dbReference type="MEROPS" id="I03.004"/>
<dbReference type="EvolutionaryTrace" id="P07596"/>
<dbReference type="ExpressionAtlas" id="P07596">
    <property type="expression patterns" value="baseline and differential"/>
</dbReference>
<dbReference type="GO" id="GO:0015066">
    <property type="term" value="F:alpha-amylase inhibitor activity"/>
    <property type="evidence" value="ECO:0007669"/>
    <property type="project" value="UniProtKB-KW"/>
</dbReference>
<dbReference type="GO" id="GO:0004867">
    <property type="term" value="F:serine-type endopeptidase inhibitor activity"/>
    <property type="evidence" value="ECO:0007669"/>
    <property type="project" value="UniProtKB-KW"/>
</dbReference>
<dbReference type="CDD" id="cd23373">
    <property type="entry name" value="beta-trefoil_STI_ASI"/>
    <property type="match status" value="1"/>
</dbReference>
<dbReference type="Gene3D" id="2.80.10.50">
    <property type="match status" value="1"/>
</dbReference>
<dbReference type="InterPro" id="IPR011065">
    <property type="entry name" value="Kunitz_inhibitor_STI-like_sf"/>
</dbReference>
<dbReference type="InterPro" id="IPR002160">
    <property type="entry name" value="Prot_inh_Kunz-lg"/>
</dbReference>
<dbReference type="PANTHER" id="PTHR33107">
    <property type="entry name" value="KUNITZ TRYPSIN INHIBITOR 2"/>
    <property type="match status" value="1"/>
</dbReference>
<dbReference type="PANTHER" id="PTHR33107:SF5">
    <property type="entry name" value="KUNITZ TRYPSIN INHIBITOR 5"/>
    <property type="match status" value="1"/>
</dbReference>
<dbReference type="Pfam" id="PF00197">
    <property type="entry name" value="Kunitz_legume"/>
    <property type="match status" value="1"/>
</dbReference>
<dbReference type="PRINTS" id="PR00291">
    <property type="entry name" value="KUNITZINHBTR"/>
</dbReference>
<dbReference type="SMART" id="SM00452">
    <property type="entry name" value="STI"/>
    <property type="match status" value="1"/>
</dbReference>
<dbReference type="SUPFAM" id="SSF50386">
    <property type="entry name" value="STI-like"/>
    <property type="match status" value="1"/>
</dbReference>
<dbReference type="PROSITE" id="PS00283">
    <property type="entry name" value="SOYBEAN_KUNITZ"/>
    <property type="match status" value="1"/>
</dbReference>
<accession>P07596</accession>
<accession>P82941</accession>
<accession>Q40023</accession>
<accession>Q7M223</accession>
<sequence length="203" mass="22164">MGSRRAGSSSSPLFWPAPPSRAADPPPVHDTDGHELRADANYYVLSANRAHGGGLTMAPGHGRHCPLFVSQDPNGQHDGFPVRITPYGVAPSDKIIRLSTDVRISFRAYTTCLQSTEWHIDSELAAGRRHVITGPVKDPSPSGRENAFRIEKYSGAEVHEYKLMSCGDWCQDLGVFRDLKGGAWFLGATEPYHVVVFKKAPPA</sequence>
<comment type="function">
    <text>This protein inhibits independently subtilisin and alpha-amylase.</text>
</comment>
<comment type="similarity">
    <text evidence="5">Belongs to the protease inhibitor I3 (leguminous Kunitz-type inhibitor) family.</text>
</comment>
<comment type="sequence caution" evidence="5">
    <conflict type="frameshift">
        <sequence resource="EMBL-CDS" id="CAA78305"/>
    </conflict>
</comment>
<keyword id="KW-0002">3D-structure</keyword>
<keyword id="KW-0022">Alpha-amylase inhibitor</keyword>
<keyword id="KW-0903">Direct protein sequencing</keyword>
<keyword id="KW-1015">Disulfide bond</keyword>
<keyword id="KW-0646">Protease inhibitor</keyword>
<keyword id="KW-0722">Serine protease inhibitor</keyword>
<keyword id="KW-0732">Signal</keyword>
<protein>
    <recommendedName>
        <fullName>Alpha-amylase/subtilisin inhibitor</fullName>
    </recommendedName>
    <alternativeName>
        <fullName>BASI</fullName>
    </alternativeName>
</protein>
<proteinExistence type="evidence at protein level"/>
<reference key="1">
    <citation type="journal article" date="1989" name="Plant Mol. Biol.">
        <title>The bifunctional alpha-amylase/subtilisin inhibitor of barley: nucleotide sequence and patterns of seed-specific expression.</title>
        <authorList>
            <person name="Leah R."/>
            <person name="Mundy J."/>
        </authorList>
    </citation>
    <scope>NUCLEOTIDE SEQUENCE [MRNA]</scope>
    <source>
        <tissue>Seed</tissue>
    </source>
</reference>
<reference key="2">
    <citation type="submission" date="1992-06" db="EMBL/GenBank/DDBJ databases">
        <title>Genomic sequence of bifunctional alpha-amylase/subtilisin inhibitor from barley.</title>
        <authorList>
            <person name="McKinnon G.E."/>
            <person name="Henry R.J."/>
        </authorList>
    </citation>
    <scope>NUCLEOTIDE SEQUENCE [GENOMIC DNA]</scope>
    <source>
        <strain>cv. Betzes</strain>
    </source>
</reference>
<reference key="3">
    <citation type="journal article" date="1986" name="Carlsberg Res. Commun.">
        <title>Complete amino acid sequence of the alpha-amylase/subtilisin inhibitor from barley.</title>
        <authorList>
            <person name="Svendsen I."/>
            <person name="Hejgaard J."/>
            <person name="Mundy J."/>
        </authorList>
    </citation>
    <scope>PROTEIN SEQUENCE OF 23-203</scope>
</reference>
<reference key="4">
    <citation type="journal article" date="2000" name="Electrophoresis">
        <title>Separation and characterization of basic barley seed proteins.</title>
        <authorList>
            <person name="Kristoffersen H.E."/>
            <person name="Flengsrud R."/>
        </authorList>
    </citation>
    <scope>PROTEIN SEQUENCE OF 24-42</scope>
    <source>
        <strain>cv. Bomi</strain>
        <tissue>Starchy endosperm</tissue>
    </source>
</reference>
<reference key="5">
    <citation type="journal article" date="1995" name="Biochem. J.">
        <title>Arg-27, Arg-127 and Arg-155 in the beta-trefoil protein barley alpha-amylase/subtilisin inhibitor are interface residues in the complex with barley alpha-amylase 2.</title>
        <authorList>
            <person name="Rodenburg K.W."/>
            <person name="Varallyay E."/>
            <person name="Svendsen I."/>
            <person name="Svensson B."/>
        </authorList>
    </citation>
    <scope>PROTEIN SEQUENCE OF 25-98; 119-132; 149-153; 162-164 AND 177-183</scope>
    <source>
        <strain>cv. Piggy</strain>
        <tissue>Seed</tissue>
    </source>
</reference>
<reference key="6">
    <citation type="journal article" date="1998" name="Structure">
        <title>Barley alpha-amylase bound to its endogenous protein inhibitor BASI: crystal structure of the complex at 1.9-A resolution.</title>
        <authorList>
            <person name="Vallee F."/>
            <person name="Kadziola A."/>
            <person name="Bourne Y."/>
            <person name="Juy M."/>
            <person name="Rodenburg K.W."/>
            <person name="Svensson B."/>
            <person name="Haser R."/>
        </authorList>
    </citation>
    <scope>X-RAY CRYSTALLOGRAPHY (1.9 ANGSTROMS) OF COMPLEX WITH AMY2</scope>
    <scope>DISULFIDE BONDS</scope>
    <source>
        <strain>cv. Piggy</strain>
        <tissue>Seed</tissue>
    </source>
</reference>